<accession>C0HLU0</accession>
<feature type="peptide" id="PRO_0000453150" description="Secapin-1">
    <location>
        <begin position="1"/>
        <end position="25"/>
    </location>
</feature>
<feature type="disulfide bond" evidence="2">
    <location>
        <begin position="9"/>
        <end position="20"/>
    </location>
</feature>
<reference evidence="4" key="1">
    <citation type="journal article" date="2012" name="Chin. Chem. Lett.">
        <title>A novel peptide from Apis mellifera and solid-phase synthesis of its analogue.</title>
        <authorList>
            <person name="Meng Y."/>
            <person name="Yang X.X."/>
            <person name="Sheng Y.X."/>
            <person name="Zhang J.L."/>
            <person name="Yu D.Q."/>
        </authorList>
    </citation>
    <scope>PROTEIN SEQUENCE</scope>
    <scope>SYNTHESIS</scope>
    <scope>SUBCELLULAR LOCATION</scope>
    <scope>TISSUE SPECIFICITY</scope>
    <scope>MASS SPECTROMETRY</scope>
    <scope>DISULFIDE BOND</scope>
    <source>
        <tissue evidence="3">Venom</tissue>
    </source>
</reference>
<proteinExistence type="evidence at protein level"/>
<comment type="function">
    <text evidence="1">Serine protease inhibitor which exhibits antifibrinolytic, antielastolytic and antimicrobial activities (By similarity). Displays antimicrobial activity against bacteria and fungi (By similarity). Likely functions in the innate immune response to microbial infection and possibly in the venom, as an antifibrinolytic agent (By similarity).</text>
</comment>
<comment type="subcellular location">
    <subcellularLocation>
        <location evidence="2">Secreted</location>
    </subcellularLocation>
</comment>
<comment type="tissue specificity">
    <text evidence="5">Expressed by the venom gland.</text>
</comment>
<comment type="mass spectrometry" mass="2821.56" method="Electrospray" evidence="2"/>
<comment type="similarity">
    <text evidence="4">Belongs to the secapin family.</text>
</comment>
<organism evidence="3">
    <name type="scientific">Apis mellifera</name>
    <name type="common">Honeybee</name>
    <dbReference type="NCBI Taxonomy" id="7460"/>
    <lineage>
        <taxon>Eukaryota</taxon>
        <taxon>Metazoa</taxon>
        <taxon>Ecdysozoa</taxon>
        <taxon>Arthropoda</taxon>
        <taxon>Hexapoda</taxon>
        <taxon>Insecta</taxon>
        <taxon>Pterygota</taxon>
        <taxon>Neoptera</taxon>
        <taxon>Endopterygota</taxon>
        <taxon>Hymenoptera</taxon>
        <taxon>Apocrita</taxon>
        <taxon>Aculeata</taxon>
        <taxon>Apoidea</taxon>
        <taxon>Anthophila</taxon>
        <taxon>Apidae</taxon>
        <taxon>Apis</taxon>
    </lineage>
</organism>
<dbReference type="InParanoid" id="C0HLU0"/>
<dbReference type="Proteomes" id="UP000005203">
    <property type="component" value="Unplaced"/>
</dbReference>
<dbReference type="GO" id="GO:0005576">
    <property type="term" value="C:extracellular region"/>
    <property type="evidence" value="ECO:0007669"/>
    <property type="project" value="UniProtKB-SubCell"/>
</dbReference>
<dbReference type="GO" id="GO:0004867">
    <property type="term" value="F:serine-type endopeptidase inhibitor activity"/>
    <property type="evidence" value="ECO:0007669"/>
    <property type="project" value="UniProtKB-KW"/>
</dbReference>
<dbReference type="GO" id="GO:0042742">
    <property type="term" value="P:defense response to bacterium"/>
    <property type="evidence" value="ECO:0007669"/>
    <property type="project" value="UniProtKB-KW"/>
</dbReference>
<dbReference type="GO" id="GO:0050832">
    <property type="term" value="P:defense response to fungus"/>
    <property type="evidence" value="ECO:0007669"/>
    <property type="project" value="UniProtKB-KW"/>
</dbReference>
<dbReference type="GO" id="GO:0045087">
    <property type="term" value="P:innate immune response"/>
    <property type="evidence" value="ECO:0007669"/>
    <property type="project" value="UniProtKB-KW"/>
</dbReference>
<dbReference type="GO" id="GO:0031640">
    <property type="term" value="P:killing of cells of another organism"/>
    <property type="evidence" value="ECO:0007669"/>
    <property type="project" value="UniProtKB-KW"/>
</dbReference>
<dbReference type="InterPro" id="IPR020128">
    <property type="entry name" value="Secapin"/>
</dbReference>
<dbReference type="Pfam" id="PF17521">
    <property type="entry name" value="Secapin"/>
    <property type="match status" value="1"/>
</dbReference>
<name>SECP1_APIME</name>
<sequence length="25" mass="2825">YIINVPPRCPPGSKFVKNKCRVIVP</sequence>
<evidence type="ECO:0000250" key="1">
    <source>
        <dbReference type="UniProtKB" id="A0A0K1YW63"/>
    </source>
</evidence>
<evidence type="ECO:0000269" key="2">
    <source ref="1"/>
</evidence>
<evidence type="ECO:0000303" key="3">
    <source ref="1"/>
</evidence>
<evidence type="ECO:0000305" key="4"/>
<evidence type="ECO:0000305" key="5">
    <source ref="1"/>
</evidence>
<keyword id="KW-0044">Antibiotic</keyword>
<keyword id="KW-0929">Antimicrobial</keyword>
<keyword id="KW-0903">Direct protein sequencing</keyword>
<keyword id="KW-1015">Disulfide bond</keyword>
<keyword id="KW-0295">Fungicide</keyword>
<keyword id="KW-1199">Hemostasis impairing toxin</keyword>
<keyword id="KW-0391">Immunity</keyword>
<keyword id="KW-0399">Innate immunity</keyword>
<keyword id="KW-0646">Protease inhibitor</keyword>
<keyword id="KW-1185">Reference proteome</keyword>
<keyword id="KW-0964">Secreted</keyword>
<keyword id="KW-0722">Serine protease inhibitor</keyword>
<keyword id="KW-0800">Toxin</keyword>
<protein>
    <recommendedName>
        <fullName evidence="3">Secapin-1</fullName>
    </recommendedName>
</protein>